<keyword id="KW-0378">Hydrolase</keyword>
<keyword id="KW-0460">Magnesium</keyword>
<keyword id="KW-0479">Metal-binding</keyword>
<accession>Q99VE8</accession>
<evidence type="ECO:0000269" key="1">
    <source>
    </source>
</evidence>
<evidence type="ECO:0000303" key="2">
    <source>
    </source>
</evidence>
<evidence type="ECO:0000305" key="3"/>
<evidence type="ECO:0000305" key="4">
    <source>
    </source>
</evidence>
<gene>
    <name type="primary">nagD</name>
    <name type="ordered locus">SAV0929</name>
</gene>
<feature type="chain" id="PRO_0000271485" description="Acid sugar phosphatase">
    <location>
        <begin position="1"/>
        <end position="259"/>
    </location>
</feature>
<name>NAGD_STAAM</name>
<comment type="function">
    <text evidence="1">Catalyzes the dephosphorylation of 2-6 carbon acid sugars in vitro.</text>
</comment>
<comment type="cofactor">
    <cofactor evidence="1">
        <name>Mg(2+)</name>
        <dbReference type="ChEBI" id="CHEBI:18420"/>
    </cofactor>
</comment>
<comment type="similarity">
    <text evidence="3">Belongs to the HAD-like hydrolase superfamily. NagD family.</text>
</comment>
<protein>
    <recommendedName>
        <fullName evidence="2">Acid sugar phosphatase</fullName>
        <ecNumber evidence="4">3.1.3.-</ecNumber>
    </recommendedName>
</protein>
<reference key="1">
    <citation type="journal article" date="2001" name="Lancet">
        <title>Whole genome sequencing of meticillin-resistant Staphylococcus aureus.</title>
        <authorList>
            <person name="Kuroda M."/>
            <person name="Ohta T."/>
            <person name="Uchiyama I."/>
            <person name="Baba T."/>
            <person name="Yuzawa H."/>
            <person name="Kobayashi I."/>
            <person name="Cui L."/>
            <person name="Oguchi A."/>
            <person name="Aoki K."/>
            <person name="Nagai Y."/>
            <person name="Lian J.-Q."/>
            <person name="Ito T."/>
            <person name="Kanamori M."/>
            <person name="Matsumaru H."/>
            <person name="Maruyama A."/>
            <person name="Murakami H."/>
            <person name="Hosoyama A."/>
            <person name="Mizutani-Ui Y."/>
            <person name="Takahashi N.K."/>
            <person name="Sawano T."/>
            <person name="Inoue R."/>
            <person name="Kaito C."/>
            <person name="Sekimizu K."/>
            <person name="Hirakawa H."/>
            <person name="Kuhara S."/>
            <person name="Goto S."/>
            <person name="Yabuzaki J."/>
            <person name="Kanehisa M."/>
            <person name="Yamashita A."/>
            <person name="Oshima K."/>
            <person name="Furuya K."/>
            <person name="Yoshino C."/>
            <person name="Shiba T."/>
            <person name="Hattori M."/>
            <person name="Ogasawara N."/>
            <person name="Hayashi H."/>
            <person name="Hiramatsu K."/>
        </authorList>
    </citation>
    <scope>NUCLEOTIDE SEQUENCE [LARGE SCALE GENOMIC DNA]</scope>
    <source>
        <strain>Mu50 / ATCC 700699</strain>
    </source>
</reference>
<reference key="2">
    <citation type="journal article" date="2015" name="Proc. Natl. Acad. Sci. U.S.A.">
        <title>Panoramic view of a superfamily of phosphatases through substrate profiling.</title>
        <authorList>
            <person name="Huang H."/>
            <person name="Pandya C."/>
            <person name="Liu C."/>
            <person name="Al-Obaidi N.F."/>
            <person name="Wang M."/>
            <person name="Zheng L."/>
            <person name="Toews Keating S."/>
            <person name="Aono M."/>
            <person name="Love J.D."/>
            <person name="Evans B."/>
            <person name="Seidel R.D."/>
            <person name="Hillerich B.S."/>
            <person name="Garforth S.J."/>
            <person name="Almo S.C."/>
            <person name="Mariano P.S."/>
            <person name="Dunaway-Mariano D."/>
            <person name="Allen K.N."/>
            <person name="Farelli J.D."/>
        </authorList>
    </citation>
    <scope>FUNCTION</scope>
    <scope>COFACTOR</scope>
</reference>
<sequence length="259" mass="27946">MKQYKAYLIDLDGTMYMGTDEIDGAKQFIDYLNVKGIPHLYVTNNSTKTPEQVTEKLREMHIDAKPEEVVTSALATADYISEQSPGASVYMLGGSGLNTALTEAGLVIKNDEHVDYVVIGLDEQVTYEKLAIATLGVRNGATFISTNPDVSIPKERGLLPGNGAITSVVSVSTGVSPQFIGKPEPIIMVKALEILGLDKSEVAMVGDLYDTDIMSGINVGMDTIHVQTGVSTLEDVQNKNVPPTYSFKDLNEAIAELEK</sequence>
<dbReference type="EC" id="3.1.3.-" evidence="4"/>
<dbReference type="EMBL" id="BA000017">
    <property type="protein sequence ID" value="BAB57091.1"/>
    <property type="molecule type" value="Genomic_DNA"/>
</dbReference>
<dbReference type="RefSeq" id="WP_000816184.1">
    <property type="nucleotide sequence ID" value="NC_002758.2"/>
</dbReference>
<dbReference type="SMR" id="Q99VE8"/>
<dbReference type="DNASU" id="1120904"/>
<dbReference type="KEGG" id="sav:SAV0929"/>
<dbReference type="HOGENOM" id="CLU_043473_1_1_9"/>
<dbReference type="PhylomeDB" id="Q99VE8"/>
<dbReference type="Proteomes" id="UP000002481">
    <property type="component" value="Chromosome"/>
</dbReference>
<dbReference type="GO" id="GO:0005737">
    <property type="term" value="C:cytoplasm"/>
    <property type="evidence" value="ECO:0007669"/>
    <property type="project" value="TreeGrafter"/>
</dbReference>
<dbReference type="GO" id="GO:0046872">
    <property type="term" value="F:metal ion binding"/>
    <property type="evidence" value="ECO:0007669"/>
    <property type="project" value="UniProtKB-KW"/>
</dbReference>
<dbReference type="GO" id="GO:0016791">
    <property type="term" value="F:phosphatase activity"/>
    <property type="evidence" value="ECO:0007669"/>
    <property type="project" value="TreeGrafter"/>
</dbReference>
<dbReference type="CDD" id="cd07530">
    <property type="entry name" value="HAD_Pase_UmpH-like"/>
    <property type="match status" value="1"/>
</dbReference>
<dbReference type="FunFam" id="3.40.50.1000:FF:000053">
    <property type="entry name" value="TIGR01457 family HAD hydrolase"/>
    <property type="match status" value="1"/>
</dbReference>
<dbReference type="Gene3D" id="3.40.50.1000">
    <property type="entry name" value="HAD superfamily/HAD-like"/>
    <property type="match status" value="2"/>
</dbReference>
<dbReference type="InterPro" id="IPR036412">
    <property type="entry name" value="HAD-like_sf"/>
</dbReference>
<dbReference type="InterPro" id="IPR006357">
    <property type="entry name" value="HAD-SF_hydro_IIA"/>
</dbReference>
<dbReference type="InterPro" id="IPR006354">
    <property type="entry name" value="HAD-SF_hydro_IIA_hyp1"/>
</dbReference>
<dbReference type="InterPro" id="IPR023214">
    <property type="entry name" value="HAD_sf"/>
</dbReference>
<dbReference type="NCBIfam" id="TIGR01460">
    <property type="entry name" value="HAD-SF-IIA"/>
    <property type="match status" value="1"/>
</dbReference>
<dbReference type="NCBIfam" id="TIGR01457">
    <property type="entry name" value="HAD-SF-IIA-hyp2"/>
    <property type="match status" value="1"/>
</dbReference>
<dbReference type="PANTHER" id="PTHR19288">
    <property type="entry name" value="4-NITROPHENYLPHOSPHATASE-RELATED"/>
    <property type="match status" value="1"/>
</dbReference>
<dbReference type="PANTHER" id="PTHR19288:SF46">
    <property type="entry name" value="HALOACID DEHALOGENASE-LIKE HYDROLASE DOMAIN-CONTAINING PROTEIN 2"/>
    <property type="match status" value="1"/>
</dbReference>
<dbReference type="Pfam" id="PF13344">
    <property type="entry name" value="Hydrolase_6"/>
    <property type="match status" value="1"/>
</dbReference>
<dbReference type="Pfam" id="PF13242">
    <property type="entry name" value="Hydrolase_like"/>
    <property type="match status" value="1"/>
</dbReference>
<dbReference type="PIRSF" id="PIRSF000915">
    <property type="entry name" value="PGP-type_phosphatase"/>
    <property type="match status" value="1"/>
</dbReference>
<dbReference type="SFLD" id="SFLDG01139">
    <property type="entry name" value="C2.A:_Pyridoxal_Phosphate_Phos"/>
    <property type="match status" value="1"/>
</dbReference>
<dbReference type="SFLD" id="SFLDS00003">
    <property type="entry name" value="Haloacid_Dehalogenase"/>
    <property type="match status" value="1"/>
</dbReference>
<dbReference type="SUPFAM" id="SSF56784">
    <property type="entry name" value="HAD-like"/>
    <property type="match status" value="1"/>
</dbReference>
<proteinExistence type="inferred from homology"/>
<organism>
    <name type="scientific">Staphylococcus aureus (strain Mu50 / ATCC 700699)</name>
    <dbReference type="NCBI Taxonomy" id="158878"/>
    <lineage>
        <taxon>Bacteria</taxon>
        <taxon>Bacillati</taxon>
        <taxon>Bacillota</taxon>
        <taxon>Bacilli</taxon>
        <taxon>Bacillales</taxon>
        <taxon>Staphylococcaceae</taxon>
        <taxon>Staphylococcus</taxon>
    </lineage>
</organism>